<dbReference type="EC" id="6.3.4.3" evidence="1"/>
<dbReference type="EMBL" id="AM180252">
    <property type="protein sequence ID" value="CAJ54928.1"/>
    <property type="molecule type" value="Genomic_DNA"/>
</dbReference>
<dbReference type="RefSeq" id="WP_011526957.1">
    <property type="nucleotide sequence ID" value="NC_008011.1"/>
</dbReference>
<dbReference type="SMR" id="Q1MPZ9"/>
<dbReference type="STRING" id="363253.LI0874"/>
<dbReference type="KEGG" id="lip:LI0874"/>
<dbReference type="eggNOG" id="COG2759">
    <property type="taxonomic scope" value="Bacteria"/>
</dbReference>
<dbReference type="HOGENOM" id="CLU_003601_3_3_7"/>
<dbReference type="OrthoDB" id="9761733at2"/>
<dbReference type="UniPathway" id="UPA00193"/>
<dbReference type="Proteomes" id="UP000002430">
    <property type="component" value="Chromosome"/>
</dbReference>
<dbReference type="GO" id="GO:0005524">
    <property type="term" value="F:ATP binding"/>
    <property type="evidence" value="ECO:0007669"/>
    <property type="project" value="UniProtKB-UniRule"/>
</dbReference>
<dbReference type="GO" id="GO:0004329">
    <property type="term" value="F:formate-tetrahydrofolate ligase activity"/>
    <property type="evidence" value="ECO:0007669"/>
    <property type="project" value="UniProtKB-UniRule"/>
</dbReference>
<dbReference type="GO" id="GO:0035999">
    <property type="term" value="P:tetrahydrofolate interconversion"/>
    <property type="evidence" value="ECO:0007669"/>
    <property type="project" value="UniProtKB-UniRule"/>
</dbReference>
<dbReference type="CDD" id="cd00477">
    <property type="entry name" value="FTHFS"/>
    <property type="match status" value="1"/>
</dbReference>
<dbReference type="Gene3D" id="3.30.1510.10">
    <property type="entry name" value="Domain 2, N(10)-formyltetrahydrofolate synthetase"/>
    <property type="match status" value="1"/>
</dbReference>
<dbReference type="Gene3D" id="3.10.410.10">
    <property type="entry name" value="Formyltetrahydrofolate synthetase, domain 3"/>
    <property type="match status" value="1"/>
</dbReference>
<dbReference type="Gene3D" id="3.40.50.300">
    <property type="entry name" value="P-loop containing nucleotide triphosphate hydrolases"/>
    <property type="match status" value="1"/>
</dbReference>
<dbReference type="HAMAP" id="MF_01543">
    <property type="entry name" value="FTHFS"/>
    <property type="match status" value="1"/>
</dbReference>
<dbReference type="InterPro" id="IPR000559">
    <property type="entry name" value="Formate_THF_ligase"/>
</dbReference>
<dbReference type="InterPro" id="IPR020628">
    <property type="entry name" value="Formate_THF_ligase_CS"/>
</dbReference>
<dbReference type="InterPro" id="IPR027417">
    <property type="entry name" value="P-loop_NTPase"/>
</dbReference>
<dbReference type="NCBIfam" id="NF010032">
    <property type="entry name" value="PRK13507.1"/>
    <property type="match status" value="1"/>
</dbReference>
<dbReference type="Pfam" id="PF01268">
    <property type="entry name" value="FTHFS"/>
    <property type="match status" value="1"/>
</dbReference>
<dbReference type="SUPFAM" id="SSF52540">
    <property type="entry name" value="P-loop containing nucleoside triphosphate hydrolases"/>
    <property type="match status" value="1"/>
</dbReference>
<dbReference type="PROSITE" id="PS00721">
    <property type="entry name" value="FTHFS_1"/>
    <property type="match status" value="1"/>
</dbReference>
<name>FTHS_LAWIP</name>
<organism>
    <name type="scientific">Lawsonia intracellularis (strain PHE/MN1-00)</name>
    <dbReference type="NCBI Taxonomy" id="363253"/>
    <lineage>
        <taxon>Bacteria</taxon>
        <taxon>Pseudomonadati</taxon>
        <taxon>Thermodesulfobacteriota</taxon>
        <taxon>Desulfovibrionia</taxon>
        <taxon>Desulfovibrionales</taxon>
        <taxon>Desulfovibrionaceae</taxon>
        <taxon>Lawsonia</taxon>
    </lineage>
</organism>
<accession>Q1MPZ9</accession>
<protein>
    <recommendedName>
        <fullName evidence="1">Formate--tetrahydrofolate ligase</fullName>
        <ecNumber evidence="1">6.3.4.3</ecNumber>
    </recommendedName>
    <alternativeName>
        <fullName evidence="1">Formyltetrahydrofolate synthetase</fullName>
        <shortName evidence="1">FHS</shortName>
        <shortName evidence="1">FTHFS</shortName>
    </alternativeName>
</protein>
<gene>
    <name evidence="1" type="primary">fhs</name>
    <name type="ordered locus">LI0874</name>
</gene>
<feature type="chain" id="PRO_0000293044" description="Formate--tetrahydrofolate ligase">
    <location>
        <begin position="1"/>
        <end position="591"/>
    </location>
</feature>
<feature type="binding site" evidence="1">
    <location>
        <begin position="74"/>
        <end position="81"/>
    </location>
    <ligand>
        <name>ATP</name>
        <dbReference type="ChEBI" id="CHEBI:30616"/>
    </ligand>
</feature>
<proteinExistence type="inferred from homology"/>
<keyword id="KW-0067">ATP-binding</keyword>
<keyword id="KW-0436">Ligase</keyword>
<keyword id="KW-0547">Nucleotide-binding</keyword>
<keyword id="KW-0554">One-carbon metabolism</keyword>
<keyword id="KW-1185">Reference proteome</keyword>
<sequence length="591" mass="64251">MSLSPLNYADWEIAQAAEKHMKTVYDLGKDLGLDHKEIFPYGHYMGKVDYKSVLSRLEQSSDGKYIDVTAITPTPLGEGKSTTTIGLVQGLAKRGKRSSAAIRQPSGGPTMGVKGSAAGGGLSQCIPLTQYSLGFTGDINAVMNAHNLSMVALTSRMQHERNYSDEKLYALSNMKRLDIDPTNIPMGWVMDFCCQSLRNIIIGIDGVSGKSDGYMMRSHFDIAVSSEVMAILAIAKDLKDFRQRISKIIVAYDKQGKAITTADLEVDGAMTAWMVEAINPNLIQSIEGQPIFVHAGPFANIAIGQSSVIADRLGLKLSEYHVTESGFGVDIGYEKFWNLKCHYSGLTPDAAVIVTTVRALKSHGGAPIPIPGRPLPKEYTEENVGYVEVGSANLIHHINTVKKSGVPPVVCINAFTTDTPSEIAKIRQLCELVGARVAVSKHWEYGGDGALELADAVIDACNEEKNFLPLYDWSLPLKERIEKIAFEVYGAEGVEFSEEAIYKLNKLQADNNSSDLGVCMVKTHLSLSDDPKQKGVPDHWKLHVRDIMFFGGAGFVVPIAGSITLMPGTGSNPSFRRIDVDTDTGKVKGIF</sequence>
<comment type="catalytic activity">
    <reaction evidence="1">
        <text>(6S)-5,6,7,8-tetrahydrofolate + formate + ATP = (6R)-10-formyltetrahydrofolate + ADP + phosphate</text>
        <dbReference type="Rhea" id="RHEA:20221"/>
        <dbReference type="ChEBI" id="CHEBI:15740"/>
        <dbReference type="ChEBI" id="CHEBI:30616"/>
        <dbReference type="ChEBI" id="CHEBI:43474"/>
        <dbReference type="ChEBI" id="CHEBI:57453"/>
        <dbReference type="ChEBI" id="CHEBI:195366"/>
        <dbReference type="ChEBI" id="CHEBI:456216"/>
        <dbReference type="EC" id="6.3.4.3"/>
    </reaction>
</comment>
<comment type="pathway">
    <text evidence="1">One-carbon metabolism; tetrahydrofolate interconversion.</text>
</comment>
<comment type="similarity">
    <text evidence="1">Belongs to the formate--tetrahydrofolate ligase family.</text>
</comment>
<evidence type="ECO:0000255" key="1">
    <source>
        <dbReference type="HAMAP-Rule" id="MF_01543"/>
    </source>
</evidence>
<reference key="1">
    <citation type="submission" date="2005-11" db="EMBL/GenBank/DDBJ databases">
        <title>The complete genome sequence of Lawsonia intracellularis: the causative agent of proliferative enteropathy.</title>
        <authorList>
            <person name="Kaur K."/>
            <person name="Zhang Q."/>
            <person name="Beckler D."/>
            <person name="Munir S."/>
            <person name="Li L."/>
            <person name="Kinsley K."/>
            <person name="Herron L."/>
            <person name="Peterson A."/>
            <person name="May B."/>
            <person name="Singh S."/>
            <person name="Gebhart C."/>
            <person name="Kapur V."/>
        </authorList>
    </citation>
    <scope>NUCLEOTIDE SEQUENCE [LARGE SCALE GENOMIC DNA]</scope>
    <source>
        <strain>PHE/MN1-00</strain>
    </source>
</reference>